<reference key="1">
    <citation type="journal article" date="2006" name="BMC Evol. Biol.">
        <title>Phylogenetic analyses of Vitis (Vitaceae) based on complete chloroplast genome sequences: effects of taxon sampling and phylogenetic methods on resolving relationships among rosids.</title>
        <authorList>
            <person name="Jansen R.K."/>
            <person name="Kaittanis C."/>
            <person name="Lee S.-B."/>
            <person name="Saski C."/>
            <person name="Tomkins J."/>
            <person name="Alverson A.J."/>
            <person name="Daniell H."/>
        </authorList>
    </citation>
    <scope>NUCLEOTIDE SEQUENCE [LARGE SCALE GENOMIC DNA]</scope>
    <source>
        <strain>cv. Maxxa</strain>
    </source>
</reference>
<reference key="2">
    <citation type="journal article" date="2007" name="PLoS ONE">
        <title>A high quality draft consensus sequence of the genome of a heterozygous grapevine variety.</title>
        <authorList>
            <person name="Velasco R."/>
            <person name="Zharkikh A."/>
            <person name="Troggio M."/>
            <person name="Cartwright D.A."/>
            <person name="Cestaro A."/>
            <person name="Pruss D."/>
            <person name="Pindo M."/>
            <person name="FitzGerald L.M."/>
            <person name="Vezzulli S."/>
            <person name="Reid J."/>
            <person name="Malacarne G."/>
            <person name="Iliev D."/>
            <person name="Coppola G."/>
            <person name="Wardell B."/>
            <person name="Micheletti D."/>
            <person name="Macalma T."/>
            <person name="Facci M."/>
            <person name="Mitchell J.T."/>
            <person name="Perazzolli M."/>
            <person name="Eldredge G."/>
            <person name="Gatto P."/>
            <person name="Oyzerski R."/>
            <person name="Moretto M."/>
            <person name="Gutin N."/>
            <person name="Stefanini M."/>
            <person name="Chen Y."/>
            <person name="Segala C."/>
            <person name="Davenport C."/>
            <person name="Dematte L."/>
            <person name="Mraz A."/>
            <person name="Battilana J."/>
            <person name="Stormo K."/>
            <person name="Costa F."/>
            <person name="Tao Q."/>
            <person name="Si-Ammour A."/>
            <person name="Harkins T."/>
            <person name="Lackey A."/>
            <person name="Perbost C."/>
            <person name="Taillon B."/>
            <person name="Stella A."/>
            <person name="Solovyev V."/>
            <person name="Fawcett J.A."/>
            <person name="Sterck L."/>
            <person name="Vandepoele K."/>
            <person name="Grando S.M."/>
            <person name="Toppo S."/>
            <person name="Moser C."/>
            <person name="Lanchbury J."/>
            <person name="Bogden R."/>
            <person name="Skolnick M."/>
            <person name="Sgaramella V."/>
            <person name="Bhatnagar S.K."/>
            <person name="Fontana P."/>
            <person name="Gutin A."/>
            <person name="Van de Peer Y."/>
            <person name="Salamini F."/>
            <person name="Viola R."/>
        </authorList>
    </citation>
    <scope>NUCLEOTIDE SEQUENCE [LARGE SCALE GENOMIC DNA]</scope>
    <source>
        <strain>cv. Pinot noir</strain>
    </source>
</reference>
<organism>
    <name type="scientific">Vitis vinifera</name>
    <name type="common">Grape</name>
    <dbReference type="NCBI Taxonomy" id="29760"/>
    <lineage>
        <taxon>Eukaryota</taxon>
        <taxon>Viridiplantae</taxon>
        <taxon>Streptophyta</taxon>
        <taxon>Embryophyta</taxon>
        <taxon>Tracheophyta</taxon>
        <taxon>Spermatophyta</taxon>
        <taxon>Magnoliopsida</taxon>
        <taxon>eudicotyledons</taxon>
        <taxon>Gunneridae</taxon>
        <taxon>Pentapetalae</taxon>
        <taxon>rosids</taxon>
        <taxon>Vitales</taxon>
        <taxon>Vitaceae</taxon>
        <taxon>Viteae</taxon>
        <taxon>Vitis</taxon>
    </lineage>
</organism>
<protein>
    <recommendedName>
        <fullName evidence="1">NAD(P)H-quinone oxidoreductase subunit K, chloroplastic</fullName>
        <ecNumber evidence="1">7.1.1.-</ecNumber>
    </recommendedName>
    <alternativeName>
        <fullName evidence="1">NAD(P)H dehydrogenase subunit K</fullName>
    </alternativeName>
    <alternativeName>
        <fullName evidence="1">NADH-plastoquinone oxidoreductase subunit K</fullName>
    </alternativeName>
</protein>
<name>NDHK_VITVI</name>
<geneLocation type="chloroplast"/>
<sequence length="225" mass="25424">MNSIEFPLLDRTTQNSVISTTSNDLSNWSRLSSLWPLLYGTSCCFIEFASLIGSRFDFDRYGLVPRSSPRQADLILTAGTVTMKMAPSLVRLYEQMPEPKYVIAMGACTITGGMFSTDSYSTVRGVDKLIPVDVYLPGCPPKPEAVIDAITKLRKKISREIYEDRIRSQQENRCFTTNHKFHVGRSTHTGNYDQRLLYQSPSTSEIPLETFFKYKSSVSSPEFVN</sequence>
<gene>
    <name evidence="1" type="primary">ndhK</name>
    <name type="ORF">VITISV_025533</name>
</gene>
<accession>Q0ZJ16</accession>
<evidence type="ECO:0000255" key="1">
    <source>
        <dbReference type="HAMAP-Rule" id="MF_01356"/>
    </source>
</evidence>
<evidence type="ECO:0000305" key="2"/>
<feature type="chain" id="PRO_0000358586" description="NAD(P)H-quinone oxidoreductase subunit K, chloroplastic">
    <location>
        <begin position="1"/>
        <end position="225"/>
    </location>
</feature>
<feature type="binding site" evidence="1">
    <location>
        <position position="43"/>
    </location>
    <ligand>
        <name>[4Fe-4S] cluster</name>
        <dbReference type="ChEBI" id="CHEBI:49883"/>
    </ligand>
</feature>
<feature type="binding site" evidence="1">
    <location>
        <position position="44"/>
    </location>
    <ligand>
        <name>[4Fe-4S] cluster</name>
        <dbReference type="ChEBI" id="CHEBI:49883"/>
    </ligand>
</feature>
<feature type="binding site" evidence="1">
    <location>
        <position position="108"/>
    </location>
    <ligand>
        <name>[4Fe-4S] cluster</name>
        <dbReference type="ChEBI" id="CHEBI:49883"/>
    </ligand>
</feature>
<feature type="binding site" evidence="1">
    <location>
        <position position="139"/>
    </location>
    <ligand>
        <name>[4Fe-4S] cluster</name>
        <dbReference type="ChEBI" id="CHEBI:49883"/>
    </ligand>
</feature>
<dbReference type="EC" id="7.1.1.-" evidence="1"/>
<dbReference type="EMBL" id="DQ424856">
    <property type="protein sequence ID" value="ABE47538.1"/>
    <property type="status" value="ALT_INIT"/>
    <property type="molecule type" value="Genomic_DNA"/>
</dbReference>
<dbReference type="EMBL" id="AM460945">
    <property type="protein sequence ID" value="CAN63542.1"/>
    <property type="molecule type" value="Genomic_DNA"/>
</dbReference>
<dbReference type="RefSeq" id="YP_567080.2">
    <property type="nucleotide sequence ID" value="NC_007957.1"/>
</dbReference>
<dbReference type="SMR" id="Q0ZJ16"/>
<dbReference type="FunCoup" id="Q0ZJ16">
    <property type="interactions" value="47"/>
</dbReference>
<dbReference type="STRING" id="29760.Q0ZJ16"/>
<dbReference type="GeneID" id="4025142"/>
<dbReference type="KEGG" id="vvi:4025142"/>
<dbReference type="InParanoid" id="Q0ZJ16"/>
<dbReference type="OrthoDB" id="907793at71240"/>
<dbReference type="Proteomes" id="UP000009183">
    <property type="component" value="Chloroplast"/>
</dbReference>
<dbReference type="ExpressionAtlas" id="Q0ZJ16">
    <property type="expression patterns" value="baseline and differential"/>
</dbReference>
<dbReference type="GO" id="GO:0009535">
    <property type="term" value="C:chloroplast thylakoid membrane"/>
    <property type="evidence" value="ECO:0007669"/>
    <property type="project" value="UniProtKB-SubCell"/>
</dbReference>
<dbReference type="GO" id="GO:0045271">
    <property type="term" value="C:respiratory chain complex I"/>
    <property type="evidence" value="ECO:0000318"/>
    <property type="project" value="GO_Central"/>
</dbReference>
<dbReference type="GO" id="GO:0051539">
    <property type="term" value="F:4 iron, 4 sulfur cluster binding"/>
    <property type="evidence" value="ECO:0007669"/>
    <property type="project" value="UniProtKB-KW"/>
</dbReference>
<dbReference type="GO" id="GO:0005506">
    <property type="term" value="F:iron ion binding"/>
    <property type="evidence" value="ECO:0007669"/>
    <property type="project" value="UniProtKB-UniRule"/>
</dbReference>
<dbReference type="GO" id="GO:0008137">
    <property type="term" value="F:NADH dehydrogenase (ubiquinone) activity"/>
    <property type="evidence" value="ECO:0000318"/>
    <property type="project" value="GO_Central"/>
</dbReference>
<dbReference type="GO" id="GO:0048038">
    <property type="term" value="F:quinone binding"/>
    <property type="evidence" value="ECO:0007669"/>
    <property type="project" value="UniProtKB-KW"/>
</dbReference>
<dbReference type="GO" id="GO:0009060">
    <property type="term" value="P:aerobic respiration"/>
    <property type="evidence" value="ECO:0000318"/>
    <property type="project" value="GO_Central"/>
</dbReference>
<dbReference type="GO" id="GO:0015990">
    <property type="term" value="P:electron transport coupled proton transport"/>
    <property type="evidence" value="ECO:0000318"/>
    <property type="project" value="GO_Central"/>
</dbReference>
<dbReference type="GO" id="GO:0019684">
    <property type="term" value="P:photosynthesis, light reaction"/>
    <property type="evidence" value="ECO:0007669"/>
    <property type="project" value="UniProtKB-UniRule"/>
</dbReference>
<dbReference type="FunFam" id="3.40.50.12280:FF:000003">
    <property type="entry name" value="NAD(P)H-quinone oxidoreductase subunit K, chloroplastic"/>
    <property type="match status" value="1"/>
</dbReference>
<dbReference type="Gene3D" id="3.40.50.12280">
    <property type="match status" value="1"/>
</dbReference>
<dbReference type="HAMAP" id="MF_01356">
    <property type="entry name" value="NDH1_NuoB"/>
    <property type="match status" value="1"/>
</dbReference>
<dbReference type="InterPro" id="IPR006137">
    <property type="entry name" value="NADH_UbQ_OxRdtase-like_20kDa"/>
</dbReference>
<dbReference type="InterPro" id="IPR006138">
    <property type="entry name" value="NADH_UQ_OxRdtase_20Kd_su"/>
</dbReference>
<dbReference type="NCBIfam" id="TIGR01957">
    <property type="entry name" value="nuoB_fam"/>
    <property type="match status" value="1"/>
</dbReference>
<dbReference type="NCBIfam" id="NF005012">
    <property type="entry name" value="PRK06411.1"/>
    <property type="match status" value="1"/>
</dbReference>
<dbReference type="PANTHER" id="PTHR11995">
    <property type="entry name" value="NADH DEHYDROGENASE"/>
    <property type="match status" value="1"/>
</dbReference>
<dbReference type="PANTHER" id="PTHR11995:SF14">
    <property type="entry name" value="NADH DEHYDROGENASE [UBIQUINONE] IRON-SULFUR PROTEIN 7, MITOCHONDRIAL"/>
    <property type="match status" value="1"/>
</dbReference>
<dbReference type="Pfam" id="PF01058">
    <property type="entry name" value="Oxidored_q6"/>
    <property type="match status" value="1"/>
</dbReference>
<dbReference type="SUPFAM" id="SSF56770">
    <property type="entry name" value="HydA/Nqo6-like"/>
    <property type="match status" value="1"/>
</dbReference>
<dbReference type="PROSITE" id="PS01150">
    <property type="entry name" value="COMPLEX1_20K"/>
    <property type="match status" value="1"/>
</dbReference>
<comment type="function">
    <text evidence="1">NDH shuttles electrons from NAD(P)H:plastoquinone, via FMN and iron-sulfur (Fe-S) centers, to quinones in the photosynthetic chain and possibly in a chloroplast respiratory chain. The immediate electron acceptor for the enzyme in this species is believed to be plastoquinone. Couples the redox reaction to proton translocation, and thus conserves the redox energy in a proton gradient.</text>
</comment>
<comment type="catalytic activity">
    <reaction evidence="1">
        <text>a plastoquinone + NADH + (n+1) H(+)(in) = a plastoquinol + NAD(+) + n H(+)(out)</text>
        <dbReference type="Rhea" id="RHEA:42608"/>
        <dbReference type="Rhea" id="RHEA-COMP:9561"/>
        <dbReference type="Rhea" id="RHEA-COMP:9562"/>
        <dbReference type="ChEBI" id="CHEBI:15378"/>
        <dbReference type="ChEBI" id="CHEBI:17757"/>
        <dbReference type="ChEBI" id="CHEBI:57540"/>
        <dbReference type="ChEBI" id="CHEBI:57945"/>
        <dbReference type="ChEBI" id="CHEBI:62192"/>
    </reaction>
</comment>
<comment type="catalytic activity">
    <reaction evidence="1">
        <text>a plastoquinone + NADPH + (n+1) H(+)(in) = a plastoquinol + NADP(+) + n H(+)(out)</text>
        <dbReference type="Rhea" id="RHEA:42612"/>
        <dbReference type="Rhea" id="RHEA-COMP:9561"/>
        <dbReference type="Rhea" id="RHEA-COMP:9562"/>
        <dbReference type="ChEBI" id="CHEBI:15378"/>
        <dbReference type="ChEBI" id="CHEBI:17757"/>
        <dbReference type="ChEBI" id="CHEBI:57783"/>
        <dbReference type="ChEBI" id="CHEBI:58349"/>
        <dbReference type="ChEBI" id="CHEBI:62192"/>
    </reaction>
</comment>
<comment type="cofactor">
    <cofactor evidence="1">
        <name>[4Fe-4S] cluster</name>
        <dbReference type="ChEBI" id="CHEBI:49883"/>
    </cofactor>
    <text evidence="1">Binds 1 [4Fe-4S] cluster.</text>
</comment>
<comment type="subunit">
    <text evidence="1">NDH is composed of at least 16 different subunits, 5 of which are encoded in the nucleus.</text>
</comment>
<comment type="subcellular location">
    <subcellularLocation>
        <location evidence="1">Plastid</location>
        <location evidence="1">Chloroplast thylakoid membrane</location>
        <topology evidence="1">Peripheral membrane protein</topology>
        <orientation evidence="1">Stromal side</orientation>
    </subcellularLocation>
</comment>
<comment type="similarity">
    <text evidence="1">Belongs to the complex I 20 kDa subunit family.</text>
</comment>
<comment type="sequence caution" evidence="2">
    <conflict type="erroneous initiation">
        <sequence resource="EMBL-CDS" id="ABE47538"/>
    </conflict>
</comment>
<proteinExistence type="inferred from homology"/>
<keyword id="KW-0004">4Fe-4S</keyword>
<keyword id="KW-0150">Chloroplast</keyword>
<keyword id="KW-0408">Iron</keyword>
<keyword id="KW-0411">Iron-sulfur</keyword>
<keyword id="KW-0472">Membrane</keyword>
<keyword id="KW-0479">Metal-binding</keyword>
<keyword id="KW-0520">NAD</keyword>
<keyword id="KW-0521">NADP</keyword>
<keyword id="KW-0934">Plastid</keyword>
<keyword id="KW-0618">Plastoquinone</keyword>
<keyword id="KW-0874">Quinone</keyword>
<keyword id="KW-1185">Reference proteome</keyword>
<keyword id="KW-0793">Thylakoid</keyword>
<keyword id="KW-1278">Translocase</keyword>
<keyword id="KW-0813">Transport</keyword>